<proteinExistence type="inferred from homology"/>
<geneLocation type="chloroplast"/>
<sequence length="454" mass="50028">MWRQGMFVLPFMTRLGVTNSWGGWTISGESTSNPGLWSYEGVAASHIILSGLLFLAAIWHWVFWDLELFRDPRTQQPALDLPKIFGIHLFLSGVLCFGFGAFHVTGLFGPGIWVSDPYGLTGAVEPVAPAWGAEGFDPYNPGGIAAHHIAAGIVGILAGLFHLSVRPPQRLYKALRMGNVETVLSSSIAAVFWAAFVVGGTMWYGCAATPIELFGPTRYQWDQGFFQQEIEKRVQTSVAGGASLSTAWSTIPEKLAFYDYIGNNPAKGGLFRSGPMDNGDGIAAGWLGHATFTDKNGRELFVRRMPTFFETFPVILIDGDGVVRADVPFRRAESKYSIEQVGVNVTFYGGELDGLTFTDPATVKKYARRAQLGEVFEFDRATLQSDGVFRSSPRAWFTFAHVSFALLFFFGHIWHGARTIFRDVFAGIDPDLDEQVEFGAFQKLGDVTTRRQAV</sequence>
<dbReference type="EMBL" id="CR954199">
    <property type="protein sequence ID" value="CAL36329.1"/>
    <property type="status" value="ALT_INIT"/>
    <property type="molecule type" value="Genomic_DNA"/>
</dbReference>
<dbReference type="RefSeq" id="YP_717207.1">
    <property type="nucleotide sequence ID" value="NC_008289.1"/>
</dbReference>
<dbReference type="SMR" id="Q0P3P8"/>
<dbReference type="FunCoup" id="Q0P3P8">
    <property type="interactions" value="195"/>
</dbReference>
<dbReference type="STRING" id="70448.Q0P3P8"/>
<dbReference type="GeneID" id="4238881"/>
<dbReference type="KEGG" id="ota:OstapCp04"/>
<dbReference type="eggNOG" id="ENOG502QRV6">
    <property type="taxonomic scope" value="Eukaryota"/>
</dbReference>
<dbReference type="InParanoid" id="Q0P3P8"/>
<dbReference type="Proteomes" id="UP000009170">
    <property type="component" value="Chloroplast"/>
</dbReference>
<dbReference type="GO" id="GO:0009535">
    <property type="term" value="C:chloroplast thylakoid membrane"/>
    <property type="evidence" value="ECO:0007669"/>
    <property type="project" value="UniProtKB-SubCell"/>
</dbReference>
<dbReference type="GO" id="GO:0009523">
    <property type="term" value="C:photosystem II"/>
    <property type="evidence" value="ECO:0007669"/>
    <property type="project" value="UniProtKB-KW"/>
</dbReference>
<dbReference type="GO" id="GO:0016168">
    <property type="term" value="F:chlorophyll binding"/>
    <property type="evidence" value="ECO:0007669"/>
    <property type="project" value="UniProtKB-UniRule"/>
</dbReference>
<dbReference type="GO" id="GO:0045156">
    <property type="term" value="F:electron transporter, transferring electrons within the cyclic electron transport pathway of photosynthesis activity"/>
    <property type="evidence" value="ECO:0007669"/>
    <property type="project" value="InterPro"/>
</dbReference>
<dbReference type="GO" id="GO:0009772">
    <property type="term" value="P:photosynthetic electron transport in photosystem II"/>
    <property type="evidence" value="ECO:0007669"/>
    <property type="project" value="InterPro"/>
</dbReference>
<dbReference type="FunFam" id="3.10.680.10:FF:000001">
    <property type="entry name" value="Photosystem II CP47 reaction center protein"/>
    <property type="match status" value="1"/>
</dbReference>
<dbReference type="Gene3D" id="3.10.680.10">
    <property type="entry name" value="Photosystem II CP47 reaction center protein"/>
    <property type="match status" value="1"/>
</dbReference>
<dbReference type="HAMAP" id="MF_01495">
    <property type="entry name" value="PSII_PsbB_CP47"/>
    <property type="match status" value="1"/>
</dbReference>
<dbReference type="InterPro" id="IPR000932">
    <property type="entry name" value="PS_antenna-like"/>
</dbReference>
<dbReference type="InterPro" id="IPR036001">
    <property type="entry name" value="PS_II_antenna-like_sf"/>
</dbReference>
<dbReference type="InterPro" id="IPR017486">
    <property type="entry name" value="PSII_PsbB"/>
</dbReference>
<dbReference type="NCBIfam" id="TIGR03039">
    <property type="entry name" value="PS_II_CP47"/>
    <property type="match status" value="1"/>
</dbReference>
<dbReference type="Pfam" id="PF00421">
    <property type="entry name" value="PSII"/>
    <property type="match status" value="1"/>
</dbReference>
<dbReference type="SUPFAM" id="SSF161077">
    <property type="entry name" value="Photosystem II antenna protein-like"/>
    <property type="match status" value="1"/>
</dbReference>
<keyword id="KW-0148">Chlorophyll</keyword>
<keyword id="KW-0150">Chloroplast</keyword>
<keyword id="KW-0157">Chromophore</keyword>
<keyword id="KW-0472">Membrane</keyword>
<keyword id="KW-0602">Photosynthesis</keyword>
<keyword id="KW-0604">Photosystem II</keyword>
<keyword id="KW-0934">Plastid</keyword>
<keyword id="KW-1185">Reference proteome</keyword>
<keyword id="KW-0793">Thylakoid</keyword>
<keyword id="KW-0812">Transmembrane</keyword>
<keyword id="KW-1133">Transmembrane helix</keyword>
<gene>
    <name evidence="2" type="primary">psbB</name>
    <name type="ordered locus">OtCpg00040</name>
</gene>
<feature type="chain" id="PRO_0000361021" description="Photosystem II CP47 reaction center protein">
    <location>
        <begin position="1"/>
        <end position="454"/>
    </location>
</feature>
<feature type="transmembrane region" description="Helical" evidence="1">
    <location>
        <begin position="6"/>
        <end position="26"/>
    </location>
</feature>
<feature type="transmembrane region" description="Helical" evidence="2">
    <location>
        <begin position="47"/>
        <end position="61"/>
    </location>
</feature>
<feature type="transmembrane region" description="Helical" evidence="2">
    <location>
        <begin position="86"/>
        <end position="102"/>
    </location>
</feature>
<feature type="transmembrane region" description="Helical" evidence="2">
    <location>
        <begin position="149"/>
        <end position="164"/>
    </location>
</feature>
<feature type="transmembrane region" description="Helical" evidence="2">
    <location>
        <begin position="183"/>
        <end position="198"/>
    </location>
</feature>
<feature type="transmembrane region" description="Helical" evidence="2">
    <location>
        <begin position="403"/>
        <end position="418"/>
    </location>
</feature>
<organism>
    <name type="scientific">Ostreococcus tauri</name>
    <dbReference type="NCBI Taxonomy" id="70448"/>
    <lineage>
        <taxon>Eukaryota</taxon>
        <taxon>Viridiplantae</taxon>
        <taxon>Chlorophyta</taxon>
        <taxon>Mamiellophyceae</taxon>
        <taxon>Mamiellales</taxon>
        <taxon>Bathycoccaceae</taxon>
        <taxon>Ostreococcus</taxon>
    </lineage>
</organism>
<protein>
    <recommendedName>
        <fullName evidence="2">Photosystem II CP47 reaction center protein</fullName>
    </recommendedName>
    <alternativeName>
        <fullName evidence="2">PSII 47 kDa protein</fullName>
    </alternativeName>
    <alternativeName>
        <fullName evidence="2">Protein CP-47</fullName>
    </alternativeName>
</protein>
<reference key="1">
    <citation type="journal article" date="2007" name="Mol. Biol. Evol.">
        <title>The complete chloroplast and mitochondrial DNA sequence of Ostreococcus tauri: organelle genomes of the smallest eukaryote are examples of compaction.</title>
        <authorList>
            <person name="Robbens S."/>
            <person name="Derelle E."/>
            <person name="Ferraz C."/>
            <person name="Wuyts J."/>
            <person name="Moreau H."/>
            <person name="Van de Peer Y."/>
        </authorList>
    </citation>
    <scope>NUCLEOTIDE SEQUENCE [LARGE SCALE GENOMIC DNA]</scope>
    <source>
        <strain>OTTH0595</strain>
    </source>
</reference>
<comment type="function">
    <text evidence="2">One of the components of the core complex of photosystem II (PSII). It binds chlorophyll and helps catalyze the primary light-induced photochemical processes of PSII. PSII is a light-driven water:plastoquinone oxidoreductase, using light energy to abstract electrons from H(2)O, generating O(2) and a proton gradient subsequently used for ATP formation.</text>
</comment>
<comment type="cofactor">
    <text evidence="2">Binds multiple chlorophylls. PSII binds additional chlorophylls, carotenoids and specific lipids.</text>
</comment>
<comment type="subunit">
    <text evidence="2">PSII is composed of 1 copy each of membrane proteins PsbA, PsbB, PsbC, PsbD, PsbE, PsbF, PsbH, PsbI, PsbJ, PsbK, PsbL, PsbM, PsbT, PsbX, PsbY, PsbZ, Psb30/Ycf12, at least 3 peripheral proteins of the oxygen-evolving complex and a large number of cofactors. It forms dimeric complexes.</text>
</comment>
<comment type="subcellular location">
    <subcellularLocation>
        <location evidence="2">Plastid</location>
        <location evidence="2">Chloroplast thylakoid membrane</location>
        <topology evidence="2">Multi-pass membrane protein</topology>
    </subcellularLocation>
</comment>
<comment type="similarity">
    <text evidence="2">Belongs to the PsbB/PsbC family. PsbB subfamily.</text>
</comment>
<comment type="sequence caution" evidence="3">
    <conflict type="erroneous initiation">
        <sequence resource="EMBL-CDS" id="CAL36329"/>
    </conflict>
    <text>Truncated N-terminus.</text>
</comment>
<name>PSBB_OSTTA</name>
<evidence type="ECO:0000255" key="1"/>
<evidence type="ECO:0000255" key="2">
    <source>
        <dbReference type="HAMAP-Rule" id="MF_01495"/>
    </source>
</evidence>
<evidence type="ECO:0000305" key="3"/>
<accession>Q0P3P8</accession>